<sequence length="236" mass="26107">MAEAEDSPGEQEATSSKPLFAGLSDVSISQDIPIEGEITIPSGTRAQECDSSTLNESIRRTIMRDLKAVGRKFMHVLYPRKSNTLLRDWDLWGPLILCVSLALMLQKSSVEGKRDGGSPEFAEVFVIIWFGAVTITLNSKLLGGNISFFQSLCVLGYCVLPLNIAMLICRLLLLAGQGPINFMIRLFVVLVMFAWSVIASTAFLADCQPPNRKALAVYPVFLFYFVVSWMILTFTP</sequence>
<proteinExistence type="evidence at protein level"/>
<gene>
    <name type="primary">Yipf6</name>
</gene>
<protein>
    <recommendedName>
        <fullName>Protein YIPF6</fullName>
    </recommendedName>
    <alternativeName>
        <fullName>YIP1 family member 6</fullName>
    </alternativeName>
</protein>
<feature type="initiator methionine" description="Removed" evidence="1">
    <location>
        <position position="1"/>
    </location>
</feature>
<feature type="chain" id="PRO_0000242670" description="Protein YIPF6">
    <location>
        <begin position="2"/>
        <end position="236"/>
    </location>
</feature>
<feature type="topological domain" description="Cytoplasmic" evidence="1">
    <location>
        <begin position="2"/>
        <end position="84"/>
    </location>
</feature>
<feature type="transmembrane region" description="Helical" evidence="2">
    <location>
        <begin position="85"/>
        <end position="105"/>
    </location>
</feature>
<feature type="topological domain" description="Lumenal" evidence="3">
    <location>
        <begin position="106"/>
        <end position="116"/>
    </location>
</feature>
<feature type="transmembrane region" description="Helical" evidence="2">
    <location>
        <begin position="117"/>
        <end position="137"/>
    </location>
</feature>
<feature type="topological domain" description="Cytoplasmic" evidence="3">
    <location>
        <begin position="138"/>
        <end position="147"/>
    </location>
</feature>
<feature type="transmembrane region" description="Helical" evidence="2">
    <location>
        <begin position="148"/>
        <end position="168"/>
    </location>
</feature>
<feature type="topological domain" description="Lumenal" evidence="3">
    <location>
        <begin position="169"/>
        <end position="185"/>
    </location>
</feature>
<feature type="transmembrane region" description="Helical" evidence="2">
    <location>
        <begin position="186"/>
        <end position="206"/>
    </location>
</feature>
<feature type="topological domain" description="Cytoplasmic" evidence="3">
    <location>
        <begin position="207"/>
        <end position="213"/>
    </location>
</feature>
<feature type="transmembrane region" description="Helical" evidence="2">
    <location>
        <begin position="214"/>
        <end position="234"/>
    </location>
</feature>
<feature type="topological domain" description="Lumenal" evidence="1">
    <location>
        <begin position="235"/>
        <end position="236"/>
    </location>
</feature>
<feature type="modified residue" description="N-acetylalanine" evidence="1">
    <location>
        <position position="2"/>
    </location>
</feature>
<feature type="modified residue" description="Phosphoserine" evidence="4">
    <location>
        <position position="7"/>
    </location>
</feature>
<accession>Q4QQU5</accession>
<keyword id="KW-0007">Acetylation</keyword>
<keyword id="KW-0333">Golgi apparatus</keyword>
<keyword id="KW-0472">Membrane</keyword>
<keyword id="KW-0597">Phosphoprotein</keyword>
<keyword id="KW-1185">Reference proteome</keyword>
<keyword id="KW-0812">Transmembrane</keyword>
<keyword id="KW-1133">Transmembrane helix</keyword>
<comment type="function">
    <text evidence="1">May be required for stable YIPF1 and YIPF2 protein expression.</text>
</comment>
<comment type="subunit">
    <text evidence="1">Predominantly interacts with YIPF1 or YIPF2, but may also form a ternary complex with YIPF1 and YIPF2. This interaction may stabilize YIPF1 and YIPF2.</text>
</comment>
<comment type="subcellular location">
    <subcellularLocation>
        <location evidence="1">Golgi apparatus membrane</location>
        <topology evidence="1">Multi-pass membrane protein</topology>
    </subcellularLocation>
    <text evidence="1">Evenly distributed between cis- and trans-Golgi apparatus. Mainly localizes within medial-/trans-Golgi and trans-Golgi network (TGN), while less so within cis-Golgi.</text>
</comment>
<comment type="similarity">
    <text evidence="3">Belongs to the YIP1 family.</text>
</comment>
<name>YIPF6_RAT</name>
<dbReference type="EMBL" id="BC097987">
    <property type="protein sequence ID" value="AAH97987.1"/>
    <property type="molecule type" value="mRNA"/>
</dbReference>
<dbReference type="RefSeq" id="NP_001020918.1">
    <property type="nucleotide sequence ID" value="NM_001025747.1"/>
</dbReference>
<dbReference type="RefSeq" id="XP_006257139.1">
    <property type="nucleotide sequence ID" value="XM_006257077.5"/>
</dbReference>
<dbReference type="FunCoup" id="Q4QQU5">
    <property type="interactions" value="2666"/>
</dbReference>
<dbReference type="STRING" id="10116.ENSRNOP00000072895"/>
<dbReference type="iPTMnet" id="Q4QQU5"/>
<dbReference type="PhosphoSitePlus" id="Q4QQU5"/>
<dbReference type="PaxDb" id="10116-ENSRNOP00000008705"/>
<dbReference type="Ensembl" id="ENSRNOT00000076795.3">
    <property type="protein sequence ID" value="ENSRNOP00000068121.2"/>
    <property type="gene ID" value="ENSRNOG00000006642.9"/>
</dbReference>
<dbReference type="GeneID" id="363476"/>
<dbReference type="KEGG" id="rno:363476"/>
<dbReference type="AGR" id="RGD:1566154"/>
<dbReference type="CTD" id="286451"/>
<dbReference type="RGD" id="1566154">
    <property type="gene designation" value="Yipf6"/>
</dbReference>
<dbReference type="eggNOG" id="KOG2946">
    <property type="taxonomic scope" value="Eukaryota"/>
</dbReference>
<dbReference type="GeneTree" id="ENSGT00940000153168"/>
<dbReference type="InParanoid" id="Q4QQU5"/>
<dbReference type="OMA" id="VMAMFGW"/>
<dbReference type="OrthoDB" id="411251at2759"/>
<dbReference type="PhylomeDB" id="Q4QQU5"/>
<dbReference type="TreeFam" id="TF314563"/>
<dbReference type="Reactome" id="R-RNO-432722">
    <property type="pathway name" value="Golgi Associated Vesicle Biogenesis"/>
</dbReference>
<dbReference type="PRO" id="PR:Q4QQU5"/>
<dbReference type="Proteomes" id="UP000002494">
    <property type="component" value="Chromosome X"/>
</dbReference>
<dbReference type="Bgee" id="ENSRNOG00000006642">
    <property type="expression patterns" value="Expressed in testis and 20 other cell types or tissues"/>
</dbReference>
<dbReference type="ExpressionAtlas" id="Q4QQU5">
    <property type="expression patterns" value="baseline and differential"/>
</dbReference>
<dbReference type="GO" id="GO:0005801">
    <property type="term" value="C:cis-Golgi network"/>
    <property type="evidence" value="ECO:0000266"/>
    <property type="project" value="RGD"/>
</dbReference>
<dbReference type="GO" id="GO:0030134">
    <property type="term" value="C:COPII-coated ER to Golgi transport vesicle"/>
    <property type="evidence" value="ECO:0000266"/>
    <property type="project" value="RGD"/>
</dbReference>
<dbReference type="GO" id="GO:0005783">
    <property type="term" value="C:endoplasmic reticulum"/>
    <property type="evidence" value="ECO:0007669"/>
    <property type="project" value="Ensembl"/>
</dbReference>
<dbReference type="GO" id="GO:0005797">
    <property type="term" value="C:Golgi medial cisterna"/>
    <property type="evidence" value="ECO:0000250"/>
    <property type="project" value="UniProtKB"/>
</dbReference>
<dbReference type="GO" id="GO:0000139">
    <property type="term" value="C:Golgi membrane"/>
    <property type="evidence" value="ECO:0007669"/>
    <property type="project" value="UniProtKB-SubCell"/>
</dbReference>
<dbReference type="GO" id="GO:0000138">
    <property type="term" value="C:Golgi trans cisterna"/>
    <property type="evidence" value="ECO:0000250"/>
    <property type="project" value="UniProtKB"/>
</dbReference>
<dbReference type="GO" id="GO:0005802">
    <property type="term" value="C:trans-Golgi network"/>
    <property type="evidence" value="ECO:0000250"/>
    <property type="project" value="UniProtKB"/>
</dbReference>
<dbReference type="GO" id="GO:0042802">
    <property type="term" value="F:identical protein binding"/>
    <property type="evidence" value="ECO:0000266"/>
    <property type="project" value="RGD"/>
</dbReference>
<dbReference type="GO" id="GO:0006888">
    <property type="term" value="P:endoplasmic reticulum to Golgi vesicle-mediated transport"/>
    <property type="evidence" value="ECO:0007669"/>
    <property type="project" value="InterPro"/>
</dbReference>
<dbReference type="GO" id="GO:0060576">
    <property type="term" value="P:intestinal epithelial cell development"/>
    <property type="evidence" value="ECO:0000266"/>
    <property type="project" value="RGD"/>
</dbReference>
<dbReference type="InterPro" id="IPR045231">
    <property type="entry name" value="Yip1/4-like"/>
</dbReference>
<dbReference type="InterPro" id="IPR006977">
    <property type="entry name" value="Yip1_dom"/>
</dbReference>
<dbReference type="PANTHER" id="PTHR21236">
    <property type="entry name" value="GOLGI MEMBRANE PROTEIN YIP1"/>
    <property type="match status" value="1"/>
</dbReference>
<dbReference type="PANTHER" id="PTHR21236:SF1">
    <property type="entry name" value="PROTEIN YIPF6"/>
    <property type="match status" value="1"/>
</dbReference>
<dbReference type="Pfam" id="PF04893">
    <property type="entry name" value="Yip1"/>
    <property type="match status" value="1"/>
</dbReference>
<reference key="1">
    <citation type="journal article" date="2004" name="Genome Res.">
        <title>The status, quality, and expansion of the NIH full-length cDNA project: the Mammalian Gene Collection (MGC).</title>
        <authorList>
            <consortium name="The MGC Project Team"/>
        </authorList>
    </citation>
    <scope>NUCLEOTIDE SEQUENCE [LARGE SCALE MRNA]</scope>
    <source>
        <tissue>Placenta</tissue>
    </source>
</reference>
<reference key="2">
    <citation type="journal article" date="2012" name="Nat. Commun.">
        <title>Quantitative maps of protein phosphorylation sites across 14 different rat organs and tissues.</title>
        <authorList>
            <person name="Lundby A."/>
            <person name="Secher A."/>
            <person name="Lage K."/>
            <person name="Nordsborg N.B."/>
            <person name="Dmytriyev A."/>
            <person name="Lundby C."/>
            <person name="Olsen J.V."/>
        </authorList>
    </citation>
    <scope>PHOSPHORYLATION [LARGE SCALE ANALYSIS] AT SER-7</scope>
    <scope>IDENTIFICATION BY MASS SPECTROMETRY [LARGE SCALE ANALYSIS]</scope>
</reference>
<organism>
    <name type="scientific">Rattus norvegicus</name>
    <name type="common">Rat</name>
    <dbReference type="NCBI Taxonomy" id="10116"/>
    <lineage>
        <taxon>Eukaryota</taxon>
        <taxon>Metazoa</taxon>
        <taxon>Chordata</taxon>
        <taxon>Craniata</taxon>
        <taxon>Vertebrata</taxon>
        <taxon>Euteleostomi</taxon>
        <taxon>Mammalia</taxon>
        <taxon>Eutheria</taxon>
        <taxon>Euarchontoglires</taxon>
        <taxon>Glires</taxon>
        <taxon>Rodentia</taxon>
        <taxon>Myomorpha</taxon>
        <taxon>Muroidea</taxon>
        <taxon>Muridae</taxon>
        <taxon>Murinae</taxon>
        <taxon>Rattus</taxon>
    </lineage>
</organism>
<evidence type="ECO:0000250" key="1">
    <source>
        <dbReference type="UniProtKB" id="Q96EC8"/>
    </source>
</evidence>
<evidence type="ECO:0000255" key="2"/>
<evidence type="ECO:0000305" key="3"/>
<evidence type="ECO:0007744" key="4">
    <source>
    </source>
</evidence>